<dbReference type="EC" id="1.7.2.2" evidence="1"/>
<dbReference type="EMBL" id="CP001657">
    <property type="protein sequence ID" value="ACT13463.1"/>
    <property type="molecule type" value="Genomic_DNA"/>
</dbReference>
<dbReference type="SMR" id="C6DK80"/>
<dbReference type="STRING" id="561230.PC1_2432"/>
<dbReference type="KEGG" id="pct:PC1_2432"/>
<dbReference type="eggNOG" id="COG3303">
    <property type="taxonomic scope" value="Bacteria"/>
</dbReference>
<dbReference type="HOGENOM" id="CLU_035040_1_0_6"/>
<dbReference type="OrthoDB" id="9780421at2"/>
<dbReference type="UniPathway" id="UPA00653"/>
<dbReference type="Proteomes" id="UP000002736">
    <property type="component" value="Chromosome"/>
</dbReference>
<dbReference type="GO" id="GO:0030288">
    <property type="term" value="C:outer membrane-bounded periplasmic space"/>
    <property type="evidence" value="ECO:0007669"/>
    <property type="project" value="TreeGrafter"/>
</dbReference>
<dbReference type="GO" id="GO:0005509">
    <property type="term" value="F:calcium ion binding"/>
    <property type="evidence" value="ECO:0007669"/>
    <property type="project" value="UniProtKB-UniRule"/>
</dbReference>
<dbReference type="GO" id="GO:0020037">
    <property type="term" value="F:heme binding"/>
    <property type="evidence" value="ECO:0007669"/>
    <property type="project" value="InterPro"/>
</dbReference>
<dbReference type="GO" id="GO:0005506">
    <property type="term" value="F:iron ion binding"/>
    <property type="evidence" value="ECO:0007669"/>
    <property type="project" value="UniProtKB-UniRule"/>
</dbReference>
<dbReference type="GO" id="GO:0042279">
    <property type="term" value="F:nitrite reductase (cytochrome, ammonia-forming) activity"/>
    <property type="evidence" value="ECO:0007669"/>
    <property type="project" value="UniProtKB-UniRule"/>
</dbReference>
<dbReference type="GO" id="GO:0019645">
    <property type="term" value="P:anaerobic electron transport chain"/>
    <property type="evidence" value="ECO:0007669"/>
    <property type="project" value="TreeGrafter"/>
</dbReference>
<dbReference type="GO" id="GO:0042128">
    <property type="term" value="P:nitrate assimilation"/>
    <property type="evidence" value="ECO:0007669"/>
    <property type="project" value="UniProtKB-UniRule"/>
</dbReference>
<dbReference type="CDD" id="cd00548">
    <property type="entry name" value="NrfA-like"/>
    <property type="match status" value="1"/>
</dbReference>
<dbReference type="FunFam" id="1.10.1130.10:FF:000002">
    <property type="entry name" value="Cytochrome c-552"/>
    <property type="match status" value="1"/>
</dbReference>
<dbReference type="FunFam" id="1.20.140.10:FF:000014">
    <property type="entry name" value="Cytochrome c-552"/>
    <property type="match status" value="1"/>
</dbReference>
<dbReference type="Gene3D" id="1.20.140.10">
    <property type="entry name" value="Butyryl-CoA Dehydrogenase, subunit A, domain 3"/>
    <property type="match status" value="1"/>
</dbReference>
<dbReference type="Gene3D" id="1.10.1130.10">
    <property type="entry name" value="Flavocytochrome C3, Chain A"/>
    <property type="match status" value="1"/>
</dbReference>
<dbReference type="HAMAP" id="MF_01182">
    <property type="entry name" value="Cytochrom_C552"/>
    <property type="match status" value="1"/>
</dbReference>
<dbReference type="InterPro" id="IPR003321">
    <property type="entry name" value="Cyt_c552"/>
</dbReference>
<dbReference type="InterPro" id="IPR017570">
    <property type="entry name" value="Cyt_c_NO2Rdtase_formate-dep"/>
</dbReference>
<dbReference type="InterPro" id="IPR036280">
    <property type="entry name" value="Multihaem_cyt_sf"/>
</dbReference>
<dbReference type="NCBIfam" id="TIGR03152">
    <property type="entry name" value="cyto_c552_HCOOH"/>
    <property type="match status" value="1"/>
</dbReference>
<dbReference type="NCBIfam" id="NF008339">
    <property type="entry name" value="PRK11125.1"/>
    <property type="match status" value="1"/>
</dbReference>
<dbReference type="PANTHER" id="PTHR30633:SF0">
    <property type="entry name" value="CYTOCHROME C-552"/>
    <property type="match status" value="1"/>
</dbReference>
<dbReference type="PANTHER" id="PTHR30633">
    <property type="entry name" value="CYTOCHROME C-552 RESPIRATORY NITRITE REDUCTASE"/>
    <property type="match status" value="1"/>
</dbReference>
<dbReference type="Pfam" id="PF02335">
    <property type="entry name" value="Cytochrom_C552"/>
    <property type="match status" value="1"/>
</dbReference>
<dbReference type="PIRSF" id="PIRSF000243">
    <property type="entry name" value="Cyt_c552"/>
    <property type="match status" value="1"/>
</dbReference>
<dbReference type="SUPFAM" id="SSF48695">
    <property type="entry name" value="Multiheme cytochromes"/>
    <property type="match status" value="1"/>
</dbReference>
<dbReference type="PROSITE" id="PS51008">
    <property type="entry name" value="MULTIHEME_CYTC"/>
    <property type="match status" value="1"/>
</dbReference>
<organism>
    <name type="scientific">Pectobacterium carotovorum subsp. carotovorum (strain PC1)</name>
    <dbReference type="NCBI Taxonomy" id="561230"/>
    <lineage>
        <taxon>Bacteria</taxon>
        <taxon>Pseudomonadati</taxon>
        <taxon>Pseudomonadota</taxon>
        <taxon>Gammaproteobacteria</taxon>
        <taxon>Enterobacterales</taxon>
        <taxon>Pectobacteriaceae</taxon>
        <taxon>Pectobacterium</taxon>
    </lineage>
</organism>
<proteinExistence type="inferred from homology"/>
<evidence type="ECO:0000255" key="1">
    <source>
        <dbReference type="HAMAP-Rule" id="MF_01182"/>
    </source>
</evidence>
<keyword id="KW-0106">Calcium</keyword>
<keyword id="KW-0249">Electron transport</keyword>
<keyword id="KW-0349">Heme</keyword>
<keyword id="KW-0408">Iron</keyword>
<keyword id="KW-0479">Metal-binding</keyword>
<keyword id="KW-0560">Oxidoreductase</keyword>
<keyword id="KW-0574">Periplasm</keyword>
<keyword id="KW-0732">Signal</keyword>
<keyword id="KW-0813">Transport</keyword>
<protein>
    <recommendedName>
        <fullName evidence="1">Cytochrome c-552</fullName>
        <ecNumber evidence="1">1.7.2.2</ecNumber>
    </recommendedName>
    <alternativeName>
        <fullName evidence="1">Ammonia-forming cytochrome c nitrite reductase</fullName>
        <shortName evidence="1">Cytochrome c nitrite reductase</shortName>
    </alternativeName>
</protein>
<name>NRFA_PECCP</name>
<accession>C6DK80</accession>
<gene>
    <name evidence="1" type="primary">nrfA</name>
    <name type="ordered locus">PC1_2432</name>
</gene>
<feature type="signal peptide" evidence="1">
    <location>
        <begin position="1"/>
        <end position="26"/>
    </location>
</feature>
<feature type="chain" id="PRO_5000486452" description="Cytochrome c-552">
    <location>
        <begin position="27"/>
        <end position="477"/>
    </location>
</feature>
<feature type="binding site" description="axial binding residue" evidence="1">
    <location>
        <position position="94"/>
    </location>
    <ligand>
        <name>heme c</name>
        <dbReference type="ChEBI" id="CHEBI:61717"/>
        <label>3</label>
    </ligand>
    <ligandPart>
        <name>Fe</name>
        <dbReference type="ChEBI" id="CHEBI:18248"/>
    </ligandPart>
</feature>
<feature type="binding site" description="covalent" evidence="1">
    <location>
        <position position="122"/>
    </location>
    <ligand>
        <name>heme</name>
        <dbReference type="ChEBI" id="CHEBI:30413"/>
        <label>1</label>
    </ligand>
</feature>
<feature type="binding site" description="covalent" evidence="1">
    <location>
        <position position="125"/>
    </location>
    <ligand>
        <name>heme</name>
        <dbReference type="ChEBI" id="CHEBI:30413"/>
        <label>1</label>
    </ligand>
</feature>
<feature type="binding site" description="axial binding residue" evidence="1">
    <location>
        <position position="126"/>
    </location>
    <ligand>
        <name>heme</name>
        <dbReference type="ChEBI" id="CHEBI:30413"/>
        <label>1</label>
    </ligand>
    <ligandPart>
        <name>Fe</name>
        <dbReference type="ChEBI" id="CHEBI:18248"/>
    </ligandPart>
</feature>
<feature type="binding site" description="covalent" evidence="1">
    <location>
        <position position="160"/>
    </location>
    <ligand>
        <name>heme c</name>
        <dbReference type="ChEBI" id="CHEBI:61717"/>
        <label>2</label>
    </ligand>
</feature>
<feature type="binding site" description="covalent" evidence="1">
    <location>
        <position position="163"/>
    </location>
    <ligand>
        <name>heme c</name>
        <dbReference type="ChEBI" id="CHEBI:61717"/>
        <label>2</label>
    </ligand>
</feature>
<feature type="binding site" description="axial binding residue" evidence="1">
    <location>
        <position position="164"/>
    </location>
    <ligand>
        <name>heme c</name>
        <dbReference type="ChEBI" id="CHEBI:61717"/>
        <label>2</label>
    </ligand>
    <ligandPart>
        <name>Fe</name>
        <dbReference type="ChEBI" id="CHEBI:18248"/>
    </ligandPart>
</feature>
<feature type="binding site" description="covalent" evidence="1">
    <location>
        <position position="209"/>
    </location>
    <ligand>
        <name>heme c</name>
        <dbReference type="ChEBI" id="CHEBI:61717"/>
        <label>3</label>
    </ligand>
</feature>
<feature type="binding site" description="covalent" evidence="1">
    <location>
        <position position="212"/>
    </location>
    <ligand>
        <name>heme c</name>
        <dbReference type="ChEBI" id="CHEBI:61717"/>
        <label>3</label>
    </ligand>
</feature>
<feature type="binding site" description="axial binding residue" evidence="1">
    <location>
        <position position="213"/>
    </location>
    <ligand>
        <name>heme c</name>
        <dbReference type="ChEBI" id="CHEBI:61717"/>
        <label>3</label>
    </ligand>
    <ligandPart>
        <name>Fe</name>
        <dbReference type="ChEBI" id="CHEBI:18248"/>
    </ligandPart>
</feature>
<feature type="binding site" evidence="1">
    <location>
        <position position="215"/>
    </location>
    <ligand>
        <name>Ca(2+)</name>
        <dbReference type="ChEBI" id="CHEBI:29108"/>
    </ligand>
</feature>
<feature type="binding site" evidence="1">
    <location>
        <position position="216"/>
    </location>
    <ligand>
        <name>Ca(2+)</name>
        <dbReference type="ChEBI" id="CHEBI:29108"/>
    </ligand>
</feature>
<feature type="binding site" evidence="1">
    <location>
        <position position="216"/>
    </location>
    <ligand>
        <name>substrate</name>
    </ligand>
</feature>
<feature type="binding site" evidence="1">
    <location>
        <position position="261"/>
    </location>
    <ligand>
        <name>Ca(2+)</name>
        <dbReference type="ChEBI" id="CHEBI:29108"/>
    </ligand>
</feature>
<feature type="binding site" evidence="1">
    <location>
        <position position="263"/>
    </location>
    <ligand>
        <name>Ca(2+)</name>
        <dbReference type="ChEBI" id="CHEBI:29108"/>
    </ligand>
</feature>
<feature type="binding site" evidence="1">
    <location>
        <position position="264"/>
    </location>
    <ligand>
        <name>substrate</name>
    </ligand>
</feature>
<feature type="binding site" description="axial binding residue" evidence="1">
    <location>
        <position position="275"/>
    </location>
    <ligand>
        <name>heme c</name>
        <dbReference type="ChEBI" id="CHEBI:61717"/>
        <label>5</label>
    </ligand>
    <ligandPart>
        <name>Fe</name>
        <dbReference type="ChEBI" id="CHEBI:18248"/>
    </ligandPart>
</feature>
<feature type="binding site" description="covalent" evidence="1">
    <location>
        <position position="282"/>
    </location>
    <ligand>
        <name>heme c</name>
        <dbReference type="ChEBI" id="CHEBI:61717"/>
        <label>4</label>
    </ligand>
</feature>
<feature type="binding site" description="covalent" evidence="1">
    <location>
        <position position="285"/>
    </location>
    <ligand>
        <name>heme c</name>
        <dbReference type="ChEBI" id="CHEBI:61717"/>
        <label>4</label>
    </ligand>
</feature>
<feature type="binding site" description="axial binding residue" evidence="1">
    <location>
        <position position="286"/>
    </location>
    <ligand>
        <name>heme c</name>
        <dbReference type="ChEBI" id="CHEBI:61717"/>
        <label>4</label>
    </ligand>
    <ligandPart>
        <name>Fe</name>
        <dbReference type="ChEBI" id="CHEBI:18248"/>
    </ligandPart>
</feature>
<feature type="binding site" description="axial binding residue" evidence="1">
    <location>
        <position position="301"/>
    </location>
    <ligand>
        <name>heme c</name>
        <dbReference type="ChEBI" id="CHEBI:61717"/>
        <label>2</label>
    </ligand>
    <ligandPart>
        <name>Fe</name>
        <dbReference type="ChEBI" id="CHEBI:18248"/>
    </ligandPart>
</feature>
<feature type="binding site" description="covalent" evidence="1">
    <location>
        <position position="314"/>
    </location>
    <ligand>
        <name>heme c</name>
        <dbReference type="ChEBI" id="CHEBI:61717"/>
        <label>5</label>
    </ligand>
</feature>
<feature type="binding site" description="covalent" evidence="1">
    <location>
        <position position="317"/>
    </location>
    <ligand>
        <name>heme c</name>
        <dbReference type="ChEBI" id="CHEBI:61717"/>
        <label>5</label>
    </ligand>
</feature>
<feature type="binding site" description="axial binding residue" evidence="1">
    <location>
        <position position="318"/>
    </location>
    <ligand>
        <name>heme c</name>
        <dbReference type="ChEBI" id="CHEBI:61717"/>
        <label>5</label>
    </ligand>
    <ligandPart>
        <name>Fe</name>
        <dbReference type="ChEBI" id="CHEBI:18248"/>
    </ligandPart>
</feature>
<feature type="binding site" description="axial binding residue" evidence="1">
    <location>
        <position position="393"/>
    </location>
    <ligand>
        <name>heme c</name>
        <dbReference type="ChEBI" id="CHEBI:61717"/>
        <label>4</label>
    </ligand>
    <ligandPart>
        <name>Fe</name>
        <dbReference type="ChEBI" id="CHEBI:18248"/>
    </ligandPart>
</feature>
<sequence length="477" mass="53184">MVRISTSISYLWGMVASLFLMMPAYSADAPVSSPPAPIEARNSVFTAQHPDQFNSWKATSEQSERHDALAEDPYMVILWAGYPFSRDYNKPRGHAYAITDVRETLRTGAPKTAEDGPLPMACWSCKSPDVARLIQQEGEDGYFKGKWARGGPEITNDLGCADCHDTASPDFAQGKPALTLSRPYAERAMEAIGKPFDQASRFGQQSMVCGQCHVEYYFSGKDKAVKFPWDNGTKVEDMEKYYDAISFSDWTNTLSRAPMLKAQHPEYETWSVGIHGKNNVTCIDCHMPKVKNADGKLYTDHKIGNPFDNYGETCTNCHTQDKAAMQAVVAERKTAIHELKLKAEEQLVHAHFEAKAAWDAGATEAEMQPILMDIRHAQWRWDLAVASHGIHMHAPDEGLRMLGTSLSKSAEARTKLVRLLAQKGVTGEVKLPDISTKEKAQQAIGLNMQQIKAEKQDFLNTVVPQWDEQARKAGRLN</sequence>
<reference key="1">
    <citation type="submission" date="2009-07" db="EMBL/GenBank/DDBJ databases">
        <title>Complete sequence of Pectobacterium carotovorum subsp. carotovorum PC1.</title>
        <authorList>
            <consortium name="US DOE Joint Genome Institute"/>
            <person name="Lucas S."/>
            <person name="Copeland A."/>
            <person name="Lapidus A."/>
            <person name="Glavina del Rio T."/>
            <person name="Tice H."/>
            <person name="Bruce D."/>
            <person name="Goodwin L."/>
            <person name="Pitluck S."/>
            <person name="Munk A.C."/>
            <person name="Brettin T."/>
            <person name="Detter J.C."/>
            <person name="Han C."/>
            <person name="Tapia R."/>
            <person name="Larimer F."/>
            <person name="Land M."/>
            <person name="Hauser L."/>
            <person name="Kyrpides N."/>
            <person name="Mikhailova N."/>
            <person name="Balakrishnan V."/>
            <person name="Glasner J."/>
            <person name="Perna N.T."/>
        </authorList>
    </citation>
    <scope>NUCLEOTIDE SEQUENCE [LARGE SCALE GENOMIC DNA]</scope>
    <source>
        <strain>PC1</strain>
    </source>
</reference>
<comment type="function">
    <text evidence="1">Catalyzes the reduction of nitrite to ammonia, consuming six electrons in the process.</text>
</comment>
<comment type="catalytic activity">
    <reaction evidence="1">
        <text>6 Fe(III)-[cytochrome c] + NH4(+) + 2 H2O = 6 Fe(II)-[cytochrome c] + nitrite + 8 H(+)</text>
        <dbReference type="Rhea" id="RHEA:13089"/>
        <dbReference type="Rhea" id="RHEA-COMP:10350"/>
        <dbReference type="Rhea" id="RHEA-COMP:14399"/>
        <dbReference type="ChEBI" id="CHEBI:15377"/>
        <dbReference type="ChEBI" id="CHEBI:15378"/>
        <dbReference type="ChEBI" id="CHEBI:16301"/>
        <dbReference type="ChEBI" id="CHEBI:28938"/>
        <dbReference type="ChEBI" id="CHEBI:29033"/>
        <dbReference type="ChEBI" id="CHEBI:29034"/>
        <dbReference type="EC" id="1.7.2.2"/>
    </reaction>
</comment>
<comment type="cofactor">
    <cofactor evidence="1">
        <name>Ca(2+)</name>
        <dbReference type="ChEBI" id="CHEBI:29108"/>
    </cofactor>
    <text evidence="1">Binds 1 Ca(2+) ion per monomer.</text>
</comment>
<comment type="cofactor">
    <cofactor evidence="1">
        <name>heme c</name>
        <dbReference type="ChEBI" id="CHEBI:61717"/>
    </cofactor>
    <text evidence="1">Binds 5 heme c groups covalently per monomer.</text>
</comment>
<comment type="pathway">
    <text evidence="1">Nitrogen metabolism; nitrate reduction (assimilation).</text>
</comment>
<comment type="subcellular location">
    <subcellularLocation>
        <location evidence="1">Periplasm</location>
    </subcellularLocation>
</comment>
<comment type="similarity">
    <text evidence="1">Belongs to the cytochrome c-552 family.</text>
</comment>